<accession>B2S9G5</accession>
<protein>
    <recommendedName>
        <fullName evidence="1">3-hydroxydecanoyl-[acyl-carrier-protein] dehydratase</fullName>
        <ecNumber evidence="1">4.2.1.59</ecNumber>
    </recommendedName>
    <alternativeName>
        <fullName evidence="1">3-hydroxyacyl-[acyl-carrier-protein] dehydratase FabA</fullName>
    </alternativeName>
    <alternativeName>
        <fullName evidence="1">Beta-hydroxydecanoyl thioester dehydrase</fullName>
    </alternativeName>
    <alternativeName>
        <fullName evidence="1">Trans-2-decenoyl-[acyl-carrier-protein] isomerase</fullName>
        <ecNumber evidence="1">5.3.3.14</ecNumber>
    </alternativeName>
</protein>
<keyword id="KW-0963">Cytoplasm</keyword>
<keyword id="KW-0275">Fatty acid biosynthesis</keyword>
<keyword id="KW-0276">Fatty acid metabolism</keyword>
<keyword id="KW-0413">Isomerase</keyword>
<keyword id="KW-0444">Lipid biosynthesis</keyword>
<keyword id="KW-0443">Lipid metabolism</keyword>
<keyword id="KW-0456">Lyase</keyword>
<gene>
    <name evidence="1" type="primary">fabA</name>
    <name type="ordered locus">BAbS19_I20350</name>
</gene>
<reference key="1">
    <citation type="journal article" date="2008" name="PLoS ONE">
        <title>Genome sequence of Brucella abortus vaccine strain S19 compared to virulent strains yields candidate virulence genes.</title>
        <authorList>
            <person name="Crasta O.R."/>
            <person name="Folkerts O."/>
            <person name="Fei Z."/>
            <person name="Mane S.P."/>
            <person name="Evans C."/>
            <person name="Martino-Catt S."/>
            <person name="Bricker B."/>
            <person name="Yu G."/>
            <person name="Du L."/>
            <person name="Sobral B.W."/>
        </authorList>
    </citation>
    <scope>NUCLEOTIDE SEQUENCE [LARGE SCALE GENOMIC DNA]</scope>
    <source>
        <strain>S19</strain>
    </source>
</reference>
<sequence length="172" mass="19086">MAEQKSSYGYEELLACGRGEMFGPGNAQLPLPPMLMIHRITEISETGGAFDKGYIRAEYDVRPDDWYFPCHFQGNPIMPGCLGLDGMWQLTGFFLGWLGEPGRGMALSTGEVKFKGMVRPHTKLLEYGIDFKRVMRGRLVLGTADGWLKADGELIYQATDLRVGLSKEGSAQ</sequence>
<comment type="function">
    <text evidence="1">Necessary for the introduction of cis unsaturation into fatty acids. Catalyzes the dehydration of (3R)-3-hydroxydecanoyl-ACP to E-(2)-decenoyl-ACP and then its isomerization to Z-(3)-decenoyl-ACP. Can catalyze the dehydratase reaction for beta-hydroxyacyl-ACPs with saturated chain lengths up to 16:0, being most active on intermediate chain length.</text>
</comment>
<comment type="catalytic activity">
    <reaction evidence="1">
        <text>a (3R)-hydroxyacyl-[ACP] = a (2E)-enoyl-[ACP] + H2O</text>
        <dbReference type="Rhea" id="RHEA:13097"/>
        <dbReference type="Rhea" id="RHEA-COMP:9925"/>
        <dbReference type="Rhea" id="RHEA-COMP:9945"/>
        <dbReference type="ChEBI" id="CHEBI:15377"/>
        <dbReference type="ChEBI" id="CHEBI:78784"/>
        <dbReference type="ChEBI" id="CHEBI:78827"/>
        <dbReference type="EC" id="4.2.1.59"/>
    </reaction>
</comment>
<comment type="catalytic activity">
    <reaction evidence="1">
        <text>(3R)-hydroxydecanoyl-[ACP] = (2E)-decenoyl-[ACP] + H2O</text>
        <dbReference type="Rhea" id="RHEA:41860"/>
        <dbReference type="Rhea" id="RHEA-COMP:9638"/>
        <dbReference type="Rhea" id="RHEA-COMP:9639"/>
        <dbReference type="ChEBI" id="CHEBI:15377"/>
        <dbReference type="ChEBI" id="CHEBI:78466"/>
        <dbReference type="ChEBI" id="CHEBI:78467"/>
    </reaction>
</comment>
<comment type="catalytic activity">
    <reaction evidence="1">
        <text>(2E)-decenoyl-[ACP] = (3Z)-decenoyl-[ACP]</text>
        <dbReference type="Rhea" id="RHEA:23568"/>
        <dbReference type="Rhea" id="RHEA-COMP:9639"/>
        <dbReference type="Rhea" id="RHEA-COMP:9927"/>
        <dbReference type="ChEBI" id="CHEBI:78467"/>
        <dbReference type="ChEBI" id="CHEBI:78798"/>
        <dbReference type="EC" id="5.3.3.14"/>
    </reaction>
</comment>
<comment type="pathway">
    <text evidence="1">Lipid metabolism; fatty acid biosynthesis.</text>
</comment>
<comment type="subunit">
    <text evidence="1">Homodimer.</text>
</comment>
<comment type="subcellular location">
    <subcellularLocation>
        <location evidence="1">Cytoplasm</location>
    </subcellularLocation>
</comment>
<comment type="similarity">
    <text evidence="1">Belongs to the thioester dehydratase family. FabA subfamily.</text>
</comment>
<organism>
    <name type="scientific">Brucella abortus (strain S19)</name>
    <dbReference type="NCBI Taxonomy" id="430066"/>
    <lineage>
        <taxon>Bacteria</taxon>
        <taxon>Pseudomonadati</taxon>
        <taxon>Pseudomonadota</taxon>
        <taxon>Alphaproteobacteria</taxon>
        <taxon>Hyphomicrobiales</taxon>
        <taxon>Brucellaceae</taxon>
        <taxon>Brucella/Ochrobactrum group</taxon>
        <taxon>Brucella</taxon>
    </lineage>
</organism>
<proteinExistence type="inferred from homology"/>
<evidence type="ECO:0000255" key="1">
    <source>
        <dbReference type="HAMAP-Rule" id="MF_00405"/>
    </source>
</evidence>
<name>FABA_BRUA1</name>
<feature type="chain" id="PRO_1000201172" description="3-hydroxydecanoyl-[acyl-carrier-protein] dehydratase">
    <location>
        <begin position="1"/>
        <end position="172"/>
    </location>
</feature>
<feature type="active site" evidence="1">
    <location>
        <position position="71"/>
    </location>
</feature>
<dbReference type="EC" id="4.2.1.59" evidence="1"/>
<dbReference type="EC" id="5.3.3.14" evidence="1"/>
<dbReference type="EMBL" id="CP000887">
    <property type="protein sequence ID" value="ACD73517.1"/>
    <property type="molecule type" value="Genomic_DNA"/>
</dbReference>
<dbReference type="RefSeq" id="WP_002968051.1">
    <property type="nucleotide sequence ID" value="NC_010742.1"/>
</dbReference>
<dbReference type="SMR" id="B2S9G5"/>
<dbReference type="GeneID" id="97534574"/>
<dbReference type="KEGG" id="bmc:BAbS19_I20350"/>
<dbReference type="HOGENOM" id="CLU_097925_0_0_5"/>
<dbReference type="UniPathway" id="UPA00094"/>
<dbReference type="Proteomes" id="UP000002565">
    <property type="component" value="Chromosome 1"/>
</dbReference>
<dbReference type="GO" id="GO:0005737">
    <property type="term" value="C:cytoplasm"/>
    <property type="evidence" value="ECO:0007669"/>
    <property type="project" value="UniProtKB-SubCell"/>
</dbReference>
<dbReference type="GO" id="GO:0019171">
    <property type="term" value="F:(3R)-hydroxyacyl-[acyl-carrier-protein] dehydratase activity"/>
    <property type="evidence" value="ECO:0007669"/>
    <property type="project" value="UniProtKB-UniRule"/>
</dbReference>
<dbReference type="GO" id="GO:0034017">
    <property type="term" value="F:trans-2-decenoyl-acyl-carrier-protein isomerase activity"/>
    <property type="evidence" value="ECO:0007669"/>
    <property type="project" value="UniProtKB-UniRule"/>
</dbReference>
<dbReference type="GO" id="GO:0006636">
    <property type="term" value="P:unsaturated fatty acid biosynthetic process"/>
    <property type="evidence" value="ECO:0007669"/>
    <property type="project" value="UniProtKB-UniRule"/>
</dbReference>
<dbReference type="CDD" id="cd01287">
    <property type="entry name" value="FabA"/>
    <property type="match status" value="1"/>
</dbReference>
<dbReference type="Gene3D" id="3.10.129.10">
    <property type="entry name" value="Hotdog Thioesterase"/>
    <property type="match status" value="1"/>
</dbReference>
<dbReference type="HAMAP" id="MF_00405">
    <property type="entry name" value="FabA"/>
    <property type="match status" value="1"/>
</dbReference>
<dbReference type="InterPro" id="IPR010083">
    <property type="entry name" value="FabA"/>
</dbReference>
<dbReference type="InterPro" id="IPR013114">
    <property type="entry name" value="FabA_FabZ"/>
</dbReference>
<dbReference type="InterPro" id="IPR029069">
    <property type="entry name" value="HotDog_dom_sf"/>
</dbReference>
<dbReference type="NCBIfam" id="TIGR01749">
    <property type="entry name" value="fabA"/>
    <property type="match status" value="1"/>
</dbReference>
<dbReference type="NCBIfam" id="NF003509">
    <property type="entry name" value="PRK05174.1"/>
    <property type="match status" value="1"/>
</dbReference>
<dbReference type="PANTHER" id="PTHR30272">
    <property type="entry name" value="3-HYDROXYACYL-[ACYL-CARRIER-PROTEIN] DEHYDRATASE"/>
    <property type="match status" value="1"/>
</dbReference>
<dbReference type="PANTHER" id="PTHR30272:SF8">
    <property type="entry name" value="3-HYDROXYDECANOYL-[ACYL-CARRIER-PROTEIN] DEHYDRATASE"/>
    <property type="match status" value="1"/>
</dbReference>
<dbReference type="Pfam" id="PF07977">
    <property type="entry name" value="FabA"/>
    <property type="match status" value="1"/>
</dbReference>
<dbReference type="SUPFAM" id="SSF54637">
    <property type="entry name" value="Thioesterase/thiol ester dehydrase-isomerase"/>
    <property type="match status" value="1"/>
</dbReference>